<protein>
    <recommendedName>
        <fullName evidence="1">Large ribosomal subunit protein uL18</fullName>
    </recommendedName>
    <alternativeName>
        <fullName evidence="2">50S ribosomal protein L18</fullName>
    </alternativeName>
</protein>
<proteinExistence type="inferred from homology"/>
<evidence type="ECO:0000255" key="1">
    <source>
        <dbReference type="HAMAP-Rule" id="MF_01337"/>
    </source>
</evidence>
<evidence type="ECO:0000305" key="2"/>
<accession>B5XNA9</accession>
<comment type="function">
    <text evidence="1">This is one of the proteins that bind and probably mediate the attachment of the 5S RNA into the large ribosomal subunit, where it forms part of the central protuberance.</text>
</comment>
<comment type="subunit">
    <text evidence="1">Part of the 50S ribosomal subunit; part of the 5S rRNA/L5/L18/L25 subcomplex. Contacts the 5S and 23S rRNAs.</text>
</comment>
<comment type="similarity">
    <text evidence="1">Belongs to the universal ribosomal protein uL18 family.</text>
</comment>
<keyword id="KW-0687">Ribonucleoprotein</keyword>
<keyword id="KW-0689">Ribosomal protein</keyword>
<keyword id="KW-0694">RNA-binding</keyword>
<keyword id="KW-0699">rRNA-binding</keyword>
<gene>
    <name evidence="1" type="primary">rplR</name>
    <name type="ordered locus">KPK_0414</name>
</gene>
<sequence length="117" mass="12786">MDKKSARIRRATRARRKLQELGATRLVVHRTPRHIYAQVIAPNGSEVLVAASTVEKAISEQLKYTGNKDAAAAVGKAVAERALEKGIKDVSFDRSGFQYHGRVQALADAAREAGLQF</sequence>
<dbReference type="EMBL" id="CP000964">
    <property type="protein sequence ID" value="ACI11934.1"/>
    <property type="molecule type" value="Genomic_DNA"/>
</dbReference>
<dbReference type="SMR" id="B5XNA9"/>
<dbReference type="KEGG" id="kpe:KPK_0414"/>
<dbReference type="HOGENOM" id="CLU_098841_0_1_6"/>
<dbReference type="Proteomes" id="UP000001734">
    <property type="component" value="Chromosome"/>
</dbReference>
<dbReference type="GO" id="GO:0022625">
    <property type="term" value="C:cytosolic large ribosomal subunit"/>
    <property type="evidence" value="ECO:0007669"/>
    <property type="project" value="TreeGrafter"/>
</dbReference>
<dbReference type="GO" id="GO:0008097">
    <property type="term" value="F:5S rRNA binding"/>
    <property type="evidence" value="ECO:0007669"/>
    <property type="project" value="TreeGrafter"/>
</dbReference>
<dbReference type="GO" id="GO:0003735">
    <property type="term" value="F:structural constituent of ribosome"/>
    <property type="evidence" value="ECO:0007669"/>
    <property type="project" value="InterPro"/>
</dbReference>
<dbReference type="GO" id="GO:0006412">
    <property type="term" value="P:translation"/>
    <property type="evidence" value="ECO:0007669"/>
    <property type="project" value="UniProtKB-UniRule"/>
</dbReference>
<dbReference type="CDD" id="cd00432">
    <property type="entry name" value="Ribosomal_L18_L5e"/>
    <property type="match status" value="1"/>
</dbReference>
<dbReference type="FunFam" id="3.30.420.100:FF:000001">
    <property type="entry name" value="50S ribosomal protein L18"/>
    <property type="match status" value="1"/>
</dbReference>
<dbReference type="Gene3D" id="3.30.420.100">
    <property type="match status" value="1"/>
</dbReference>
<dbReference type="HAMAP" id="MF_01337_B">
    <property type="entry name" value="Ribosomal_uL18_B"/>
    <property type="match status" value="1"/>
</dbReference>
<dbReference type="InterPro" id="IPR004389">
    <property type="entry name" value="Ribosomal_uL18_bac-type"/>
</dbReference>
<dbReference type="InterPro" id="IPR005484">
    <property type="entry name" value="Ribosomal_uL18_bac/euk"/>
</dbReference>
<dbReference type="NCBIfam" id="TIGR00060">
    <property type="entry name" value="L18_bact"/>
    <property type="match status" value="1"/>
</dbReference>
<dbReference type="PANTHER" id="PTHR12899">
    <property type="entry name" value="39S RIBOSOMAL PROTEIN L18, MITOCHONDRIAL"/>
    <property type="match status" value="1"/>
</dbReference>
<dbReference type="PANTHER" id="PTHR12899:SF3">
    <property type="entry name" value="LARGE RIBOSOMAL SUBUNIT PROTEIN UL18M"/>
    <property type="match status" value="1"/>
</dbReference>
<dbReference type="Pfam" id="PF00861">
    <property type="entry name" value="Ribosomal_L18p"/>
    <property type="match status" value="1"/>
</dbReference>
<dbReference type="SUPFAM" id="SSF53137">
    <property type="entry name" value="Translational machinery components"/>
    <property type="match status" value="1"/>
</dbReference>
<reference key="1">
    <citation type="journal article" date="2008" name="PLoS Genet.">
        <title>Complete genome sequence of the N2-fixing broad host range endophyte Klebsiella pneumoniae 342 and virulence predictions verified in mice.</title>
        <authorList>
            <person name="Fouts D.E."/>
            <person name="Tyler H.L."/>
            <person name="DeBoy R.T."/>
            <person name="Daugherty S."/>
            <person name="Ren Q."/>
            <person name="Badger J.H."/>
            <person name="Durkin A.S."/>
            <person name="Huot H."/>
            <person name="Shrivastava S."/>
            <person name="Kothari S."/>
            <person name="Dodson R.J."/>
            <person name="Mohamoud Y."/>
            <person name="Khouri H."/>
            <person name="Roesch L.F.W."/>
            <person name="Krogfelt K.A."/>
            <person name="Struve C."/>
            <person name="Triplett E.W."/>
            <person name="Methe B.A."/>
        </authorList>
    </citation>
    <scope>NUCLEOTIDE SEQUENCE [LARGE SCALE GENOMIC DNA]</scope>
    <source>
        <strain>342</strain>
    </source>
</reference>
<organism>
    <name type="scientific">Klebsiella pneumoniae (strain 342)</name>
    <dbReference type="NCBI Taxonomy" id="507522"/>
    <lineage>
        <taxon>Bacteria</taxon>
        <taxon>Pseudomonadati</taxon>
        <taxon>Pseudomonadota</taxon>
        <taxon>Gammaproteobacteria</taxon>
        <taxon>Enterobacterales</taxon>
        <taxon>Enterobacteriaceae</taxon>
        <taxon>Klebsiella/Raoultella group</taxon>
        <taxon>Klebsiella</taxon>
        <taxon>Klebsiella pneumoniae complex</taxon>
    </lineage>
</organism>
<feature type="chain" id="PRO_1000142679" description="Large ribosomal subunit protein uL18">
    <location>
        <begin position="1"/>
        <end position="117"/>
    </location>
</feature>
<name>RL18_KLEP3</name>